<feature type="chain" id="PRO_0000191876" description="Transketolase">
    <location>
        <begin position="1"/>
        <end position="662"/>
    </location>
</feature>
<feature type="active site" description="Proton donor" evidence="1">
    <location>
        <position position="410"/>
    </location>
</feature>
<feature type="binding site" evidence="1">
    <location>
        <position position="28"/>
    </location>
    <ligand>
        <name>substrate</name>
    </ligand>
</feature>
<feature type="binding site" evidence="1">
    <location>
        <position position="68"/>
    </location>
    <ligand>
        <name>thiamine diphosphate</name>
        <dbReference type="ChEBI" id="CHEBI:58937"/>
    </ligand>
</feature>
<feature type="binding site" evidence="1">
    <location>
        <begin position="115"/>
        <end position="117"/>
    </location>
    <ligand>
        <name>thiamine diphosphate</name>
        <dbReference type="ChEBI" id="CHEBI:58937"/>
    </ligand>
</feature>
<feature type="binding site" evidence="1">
    <location>
        <position position="156"/>
    </location>
    <ligand>
        <name>Mg(2+)</name>
        <dbReference type="ChEBI" id="CHEBI:18420"/>
    </ligand>
</feature>
<feature type="binding site" evidence="1">
    <location>
        <position position="157"/>
    </location>
    <ligand>
        <name>thiamine diphosphate</name>
        <dbReference type="ChEBI" id="CHEBI:58937"/>
    </ligand>
</feature>
<feature type="binding site" evidence="1">
    <location>
        <position position="186"/>
    </location>
    <ligand>
        <name>Mg(2+)</name>
        <dbReference type="ChEBI" id="CHEBI:18420"/>
    </ligand>
</feature>
<feature type="binding site" evidence="1">
    <location>
        <position position="186"/>
    </location>
    <ligand>
        <name>thiamine diphosphate</name>
        <dbReference type="ChEBI" id="CHEBI:58937"/>
    </ligand>
</feature>
<feature type="binding site" evidence="1">
    <location>
        <position position="188"/>
    </location>
    <ligand>
        <name>Mg(2+)</name>
        <dbReference type="ChEBI" id="CHEBI:18420"/>
    </ligand>
</feature>
<feature type="binding site" evidence="1">
    <location>
        <position position="261"/>
    </location>
    <ligand>
        <name>substrate</name>
    </ligand>
</feature>
<feature type="binding site" evidence="1">
    <location>
        <position position="261"/>
    </location>
    <ligand>
        <name>thiamine diphosphate</name>
        <dbReference type="ChEBI" id="CHEBI:58937"/>
    </ligand>
</feature>
<feature type="binding site" evidence="1">
    <location>
        <position position="356"/>
    </location>
    <ligand>
        <name>substrate</name>
    </ligand>
</feature>
<feature type="binding site" evidence="1">
    <location>
        <position position="383"/>
    </location>
    <ligand>
        <name>substrate</name>
    </ligand>
</feature>
<feature type="binding site" evidence="1">
    <location>
        <position position="436"/>
    </location>
    <ligand>
        <name>thiamine diphosphate</name>
        <dbReference type="ChEBI" id="CHEBI:58937"/>
    </ligand>
</feature>
<feature type="binding site" evidence="1">
    <location>
        <position position="460"/>
    </location>
    <ligand>
        <name>substrate</name>
    </ligand>
</feature>
<feature type="binding site" evidence="1">
    <location>
        <position position="468"/>
    </location>
    <ligand>
        <name>substrate</name>
    </ligand>
</feature>
<feature type="binding site" evidence="1">
    <location>
        <position position="519"/>
    </location>
    <ligand>
        <name>substrate</name>
    </ligand>
</feature>
<feature type="site" description="Important for catalytic activity" evidence="1">
    <location>
        <position position="28"/>
    </location>
</feature>
<feature type="site" description="Important for catalytic activity" evidence="1">
    <location>
        <position position="261"/>
    </location>
</feature>
<reference key="1">
    <citation type="journal article" date="2003" name="Mol. Microbiol.">
        <title>Genome-based analysis of virulence genes in a non-biofilm-forming Staphylococcus epidermidis strain (ATCC 12228).</title>
        <authorList>
            <person name="Zhang Y.-Q."/>
            <person name="Ren S.-X."/>
            <person name="Li H.-L."/>
            <person name="Wang Y.-X."/>
            <person name="Fu G."/>
            <person name="Yang J."/>
            <person name="Qin Z.-Q."/>
            <person name="Miao Y.-G."/>
            <person name="Wang W.-Y."/>
            <person name="Chen R.-S."/>
            <person name="Shen Y."/>
            <person name="Chen Z."/>
            <person name="Yuan Z.-H."/>
            <person name="Zhao G.-P."/>
            <person name="Qu D."/>
            <person name="Danchin A."/>
            <person name="Wen Y.-M."/>
        </authorList>
    </citation>
    <scope>NUCLEOTIDE SEQUENCE [LARGE SCALE GENOMIC DNA]</scope>
    <source>
        <strain>ATCC 12228 / FDA PCI 1200</strain>
    </source>
</reference>
<dbReference type="EC" id="2.2.1.1"/>
<dbReference type="EMBL" id="AE015929">
    <property type="protein sequence ID" value="AAO04622.1"/>
    <property type="molecule type" value="Genomic_DNA"/>
</dbReference>
<dbReference type="RefSeq" id="NP_764580.1">
    <property type="nucleotide sequence ID" value="NC_004461.1"/>
</dbReference>
<dbReference type="RefSeq" id="WP_001831061.1">
    <property type="nucleotide sequence ID" value="NZ_WBME01000057.1"/>
</dbReference>
<dbReference type="SMR" id="Q8CPC7"/>
<dbReference type="GeneID" id="50018848"/>
<dbReference type="KEGG" id="sep:SE_1025"/>
<dbReference type="PATRIC" id="fig|176280.10.peg.1000"/>
<dbReference type="eggNOG" id="COG0021">
    <property type="taxonomic scope" value="Bacteria"/>
</dbReference>
<dbReference type="HOGENOM" id="CLU_009227_0_0_9"/>
<dbReference type="OrthoDB" id="8732661at2"/>
<dbReference type="UniPathway" id="UPA00115"/>
<dbReference type="UniPathway" id="UPA00116"/>
<dbReference type="Proteomes" id="UP000001411">
    <property type="component" value="Chromosome"/>
</dbReference>
<dbReference type="GO" id="GO:0005829">
    <property type="term" value="C:cytosol"/>
    <property type="evidence" value="ECO:0007669"/>
    <property type="project" value="TreeGrafter"/>
</dbReference>
<dbReference type="GO" id="GO:0046872">
    <property type="term" value="F:metal ion binding"/>
    <property type="evidence" value="ECO:0007669"/>
    <property type="project" value="UniProtKB-KW"/>
</dbReference>
<dbReference type="GO" id="GO:0004802">
    <property type="term" value="F:transketolase activity"/>
    <property type="evidence" value="ECO:0007669"/>
    <property type="project" value="UniProtKB-EC"/>
</dbReference>
<dbReference type="GO" id="GO:0006310">
    <property type="term" value="P:DNA recombination"/>
    <property type="evidence" value="ECO:0007669"/>
    <property type="project" value="UniProtKB-KW"/>
</dbReference>
<dbReference type="GO" id="GO:0006098">
    <property type="term" value="P:pentose-phosphate shunt"/>
    <property type="evidence" value="ECO:0007669"/>
    <property type="project" value="UniProtKB-UniPathway"/>
</dbReference>
<dbReference type="GO" id="GO:0019253">
    <property type="term" value="P:reductive pentose-phosphate cycle"/>
    <property type="evidence" value="ECO:0007669"/>
    <property type="project" value="UniProtKB-UniPathway"/>
</dbReference>
<dbReference type="CDD" id="cd07033">
    <property type="entry name" value="TPP_PYR_DXS_TK_like"/>
    <property type="match status" value="1"/>
</dbReference>
<dbReference type="CDD" id="cd02012">
    <property type="entry name" value="TPP_TK"/>
    <property type="match status" value="1"/>
</dbReference>
<dbReference type="FunFam" id="3.40.50.920:FF:000003">
    <property type="entry name" value="Transketolase"/>
    <property type="match status" value="1"/>
</dbReference>
<dbReference type="FunFam" id="3.40.50.970:FF:000003">
    <property type="entry name" value="Transketolase"/>
    <property type="match status" value="1"/>
</dbReference>
<dbReference type="FunFam" id="3.40.50.970:FF:000081">
    <property type="entry name" value="Transketolase"/>
    <property type="match status" value="1"/>
</dbReference>
<dbReference type="Gene3D" id="3.40.50.920">
    <property type="match status" value="1"/>
</dbReference>
<dbReference type="Gene3D" id="3.40.50.970">
    <property type="match status" value="2"/>
</dbReference>
<dbReference type="InterPro" id="IPR029061">
    <property type="entry name" value="THDP-binding"/>
</dbReference>
<dbReference type="InterPro" id="IPR009014">
    <property type="entry name" value="Transketo_C/PFOR_II"/>
</dbReference>
<dbReference type="InterPro" id="IPR055152">
    <property type="entry name" value="Transketolase-like_C_2"/>
</dbReference>
<dbReference type="InterPro" id="IPR005475">
    <property type="entry name" value="Transketolase-like_Pyr-bd"/>
</dbReference>
<dbReference type="InterPro" id="IPR005478">
    <property type="entry name" value="Transketolase_bac-like"/>
</dbReference>
<dbReference type="InterPro" id="IPR020826">
    <property type="entry name" value="Transketolase_BS"/>
</dbReference>
<dbReference type="InterPro" id="IPR049557">
    <property type="entry name" value="Transketolase_CS"/>
</dbReference>
<dbReference type="InterPro" id="IPR033247">
    <property type="entry name" value="Transketolase_fam"/>
</dbReference>
<dbReference type="InterPro" id="IPR005474">
    <property type="entry name" value="Transketolase_N"/>
</dbReference>
<dbReference type="NCBIfam" id="TIGR00232">
    <property type="entry name" value="tktlase_bact"/>
    <property type="match status" value="1"/>
</dbReference>
<dbReference type="PANTHER" id="PTHR43522">
    <property type="entry name" value="TRANSKETOLASE"/>
    <property type="match status" value="1"/>
</dbReference>
<dbReference type="PANTHER" id="PTHR43522:SF2">
    <property type="entry name" value="TRANSKETOLASE 1-RELATED"/>
    <property type="match status" value="1"/>
</dbReference>
<dbReference type="Pfam" id="PF02779">
    <property type="entry name" value="Transket_pyr"/>
    <property type="match status" value="1"/>
</dbReference>
<dbReference type="Pfam" id="PF22613">
    <property type="entry name" value="Transketolase_C_1"/>
    <property type="match status" value="1"/>
</dbReference>
<dbReference type="Pfam" id="PF00456">
    <property type="entry name" value="Transketolase_N"/>
    <property type="match status" value="1"/>
</dbReference>
<dbReference type="SMART" id="SM00861">
    <property type="entry name" value="Transket_pyr"/>
    <property type="match status" value="1"/>
</dbReference>
<dbReference type="SUPFAM" id="SSF52518">
    <property type="entry name" value="Thiamin diphosphate-binding fold (THDP-binding)"/>
    <property type="match status" value="2"/>
</dbReference>
<dbReference type="SUPFAM" id="SSF52922">
    <property type="entry name" value="TK C-terminal domain-like"/>
    <property type="match status" value="1"/>
</dbReference>
<dbReference type="PROSITE" id="PS00801">
    <property type="entry name" value="TRANSKETOLASE_1"/>
    <property type="match status" value="1"/>
</dbReference>
<dbReference type="PROSITE" id="PS00802">
    <property type="entry name" value="TRANSKETOLASE_2"/>
    <property type="match status" value="1"/>
</dbReference>
<gene>
    <name type="primary">tkt</name>
    <name type="ordered locus">SE_1025</name>
</gene>
<comment type="function">
    <text evidence="1">Catalyzes the transfer of a two-carbon ketol group from a ketose donor to an aldose acceptor, via a covalent intermediate with the cofactor thiamine pyrophosphate.</text>
</comment>
<comment type="catalytic activity">
    <reaction>
        <text>D-sedoheptulose 7-phosphate + D-glyceraldehyde 3-phosphate = aldehydo-D-ribose 5-phosphate + D-xylulose 5-phosphate</text>
        <dbReference type="Rhea" id="RHEA:10508"/>
        <dbReference type="ChEBI" id="CHEBI:57483"/>
        <dbReference type="ChEBI" id="CHEBI:57737"/>
        <dbReference type="ChEBI" id="CHEBI:58273"/>
        <dbReference type="ChEBI" id="CHEBI:59776"/>
        <dbReference type="EC" id="2.2.1.1"/>
    </reaction>
</comment>
<comment type="cofactor">
    <cofactor evidence="1">
        <name>Mg(2+)</name>
        <dbReference type="ChEBI" id="CHEBI:18420"/>
    </cofactor>
    <cofactor evidence="1">
        <name>Ca(2+)</name>
        <dbReference type="ChEBI" id="CHEBI:29108"/>
    </cofactor>
    <cofactor evidence="1">
        <name>Mn(2+)</name>
        <dbReference type="ChEBI" id="CHEBI:29035"/>
    </cofactor>
    <cofactor evidence="1">
        <name>Co(2+)</name>
        <dbReference type="ChEBI" id="CHEBI:48828"/>
    </cofactor>
    <text evidence="1">Binds 1 Mg(2+) ion per subunit. Can also utilize other divalent metal cations, such as Ca(2+), Mn(2+) and Co(2+).</text>
</comment>
<comment type="cofactor">
    <cofactor evidence="1">
        <name>thiamine diphosphate</name>
        <dbReference type="ChEBI" id="CHEBI:58937"/>
    </cofactor>
    <text evidence="1">Binds 1 thiamine pyrophosphate per subunit.</text>
</comment>
<comment type="pathway">
    <text>Carbohydrate biosynthesis; Calvin cycle.</text>
</comment>
<comment type="pathway">
    <text>Carbohydrate degradation; pentose phosphate pathway.</text>
</comment>
<comment type="subunit">
    <text evidence="1">Homodimer.</text>
</comment>
<comment type="similarity">
    <text evidence="2">Belongs to the transketolase family.</text>
</comment>
<accession>Q8CPC7</accession>
<evidence type="ECO:0000250" key="1"/>
<evidence type="ECO:0000305" key="2"/>
<name>TKT_STAES</name>
<organism>
    <name type="scientific">Staphylococcus epidermidis (strain ATCC 12228 / FDA PCI 1200)</name>
    <dbReference type="NCBI Taxonomy" id="176280"/>
    <lineage>
        <taxon>Bacteria</taxon>
        <taxon>Bacillati</taxon>
        <taxon>Bacillota</taxon>
        <taxon>Bacilli</taxon>
        <taxon>Bacillales</taxon>
        <taxon>Staphylococcaceae</taxon>
        <taxon>Staphylococcus</taxon>
    </lineage>
</organism>
<protein>
    <recommendedName>
        <fullName>Transketolase</fullName>
        <shortName>TK</shortName>
        <ecNumber>2.2.1.1</ecNumber>
    </recommendedName>
</protein>
<proteinExistence type="inferred from homology"/>
<sequence>MFNEKDQLAIDTIRALSIDAIEKANSGHPGLPMGAAPMAYTLWTRHLNFNPQSKDFFNRDRFILSAGHGSALLYSLLHVSGSLELEELKQFRQWGSKTPGHPEYRHTDGVEVTTGPLGQGFAMSVGMALAESHLAGKFNKDQFDIVNHYTYVLASDGDLMEGISHEAASFAGHNQLDKLIVLYDSNDISLDGDLDKSFSEDTKQRFEAYGWNYILVENGNDLDEIDNAITQAKSQQGPTIIEVKTIIGFGSPNKAGSNGVHGAPLGEEERALTFKEYGLDPEKRFNVPEDVYEIFKSTMLKRANENEEAWNNMLKNYSEAYPELAEEFKLAMSGKLPNNYADALPEYDLNHSGASRADSGEIIQKLSEFVPSFFGGSADLAGSNKSNVKEAKDYNKDTPEGKNVWFGVREFAMGAAINGMAAHGGLHPYAATFFVFSDYLKPALRLSSIMGLNSTFIFTHDSIAVGEDGPTHEPIEQLAGLRAIPNMNVIRPADGNETRVAWEVALESEHTPTSLVLTRQNLPTLDVDKQTVENGVRKGAYIVFETEQQLEYLLLASGSEVNLAVEAAKELEQQGKGVRVISMPNWYAFEQQSSEYKESILPSDVTKRIAIEMASPLGWHKYVGIEGKVIGINSFGASAPGDLVVEKYGFTKENILKQVRSL</sequence>
<keyword id="KW-0106">Calcium</keyword>
<keyword id="KW-0233">DNA recombination</keyword>
<keyword id="KW-0460">Magnesium</keyword>
<keyword id="KW-0479">Metal-binding</keyword>
<keyword id="KW-0786">Thiamine pyrophosphate</keyword>
<keyword id="KW-0808">Transferase</keyword>